<sequence>MGRQVKCPYCETKLDKDSAIPYKKRYYHEKCFNTWKQESDHRKELIQYICNLYGLTSPTGMMLKQIKEFQEEYGYKLKGIELALRYFYETLDNQPREGDGIGIVPFVYDEAKRHYIRQKAIRKSAEDPKNHKREEITLVIKKGMRKKRGLVDISML</sequence>
<organism>
    <name type="scientific">Bacillus subtilis (strain 168)</name>
    <dbReference type="NCBI Taxonomy" id="224308"/>
    <lineage>
        <taxon>Bacteria</taxon>
        <taxon>Bacillati</taxon>
        <taxon>Bacillota</taxon>
        <taxon>Bacilli</taxon>
        <taxon>Bacillales</taxon>
        <taxon>Bacillaceae</taxon>
        <taxon>Bacillus</taxon>
    </lineage>
</organism>
<gene>
    <name type="primary">yorH</name>
    <name type="ordered locus">BSU20380</name>
</gene>
<protein>
    <recommendedName>
        <fullName>SPbeta prophage-derived uncharacterized protein YorH</fullName>
    </recommendedName>
</protein>
<dbReference type="EMBL" id="AL009126">
    <property type="protein sequence ID" value="CAB13930.1"/>
    <property type="molecule type" value="Genomic_DNA"/>
</dbReference>
<dbReference type="RefSeq" id="NP_389920.1">
    <property type="nucleotide sequence ID" value="NC_000964.3"/>
</dbReference>
<dbReference type="RefSeq" id="WP_009967478.1">
    <property type="nucleotide sequence ID" value="NZ_OZ025638.1"/>
</dbReference>
<dbReference type="FunCoup" id="O31906">
    <property type="interactions" value="110"/>
</dbReference>
<dbReference type="STRING" id="224308.BSU20380"/>
<dbReference type="PaxDb" id="224308-BSU20380"/>
<dbReference type="EnsemblBacteria" id="CAB13930">
    <property type="protein sequence ID" value="CAB13930"/>
    <property type="gene ID" value="BSU_20380"/>
</dbReference>
<dbReference type="GeneID" id="939851"/>
<dbReference type="KEGG" id="bsu:BSU20380"/>
<dbReference type="PATRIC" id="fig|224308.179.peg.2228"/>
<dbReference type="eggNOG" id="ENOG5033EU6">
    <property type="taxonomic scope" value="Bacteria"/>
</dbReference>
<dbReference type="InParanoid" id="O31906"/>
<dbReference type="OrthoDB" id="2413336at2"/>
<dbReference type="BioCyc" id="BSUB:BSU20380-MONOMER"/>
<dbReference type="Proteomes" id="UP000001570">
    <property type="component" value="Chromosome"/>
</dbReference>
<keyword id="KW-1185">Reference proteome</keyword>
<proteinExistence type="predicted"/>
<reference key="1">
    <citation type="journal article" date="1997" name="Nature">
        <title>The complete genome sequence of the Gram-positive bacterium Bacillus subtilis.</title>
        <authorList>
            <person name="Kunst F."/>
            <person name="Ogasawara N."/>
            <person name="Moszer I."/>
            <person name="Albertini A.M."/>
            <person name="Alloni G."/>
            <person name="Azevedo V."/>
            <person name="Bertero M.G."/>
            <person name="Bessieres P."/>
            <person name="Bolotin A."/>
            <person name="Borchert S."/>
            <person name="Borriss R."/>
            <person name="Boursier L."/>
            <person name="Brans A."/>
            <person name="Braun M."/>
            <person name="Brignell S.C."/>
            <person name="Bron S."/>
            <person name="Brouillet S."/>
            <person name="Bruschi C.V."/>
            <person name="Caldwell B."/>
            <person name="Capuano V."/>
            <person name="Carter N.M."/>
            <person name="Choi S.-K."/>
            <person name="Codani J.-J."/>
            <person name="Connerton I.F."/>
            <person name="Cummings N.J."/>
            <person name="Daniel R.A."/>
            <person name="Denizot F."/>
            <person name="Devine K.M."/>
            <person name="Duesterhoeft A."/>
            <person name="Ehrlich S.D."/>
            <person name="Emmerson P.T."/>
            <person name="Entian K.-D."/>
            <person name="Errington J."/>
            <person name="Fabret C."/>
            <person name="Ferrari E."/>
            <person name="Foulger D."/>
            <person name="Fritz C."/>
            <person name="Fujita M."/>
            <person name="Fujita Y."/>
            <person name="Fuma S."/>
            <person name="Galizzi A."/>
            <person name="Galleron N."/>
            <person name="Ghim S.-Y."/>
            <person name="Glaser P."/>
            <person name="Goffeau A."/>
            <person name="Golightly E.J."/>
            <person name="Grandi G."/>
            <person name="Guiseppi G."/>
            <person name="Guy B.J."/>
            <person name="Haga K."/>
            <person name="Haiech J."/>
            <person name="Harwood C.R."/>
            <person name="Henaut A."/>
            <person name="Hilbert H."/>
            <person name="Holsappel S."/>
            <person name="Hosono S."/>
            <person name="Hullo M.-F."/>
            <person name="Itaya M."/>
            <person name="Jones L.-M."/>
            <person name="Joris B."/>
            <person name="Karamata D."/>
            <person name="Kasahara Y."/>
            <person name="Klaerr-Blanchard M."/>
            <person name="Klein C."/>
            <person name="Kobayashi Y."/>
            <person name="Koetter P."/>
            <person name="Koningstein G."/>
            <person name="Krogh S."/>
            <person name="Kumano M."/>
            <person name="Kurita K."/>
            <person name="Lapidus A."/>
            <person name="Lardinois S."/>
            <person name="Lauber J."/>
            <person name="Lazarevic V."/>
            <person name="Lee S.-M."/>
            <person name="Levine A."/>
            <person name="Liu H."/>
            <person name="Masuda S."/>
            <person name="Mauel C."/>
            <person name="Medigue C."/>
            <person name="Medina N."/>
            <person name="Mellado R.P."/>
            <person name="Mizuno M."/>
            <person name="Moestl D."/>
            <person name="Nakai S."/>
            <person name="Noback M."/>
            <person name="Noone D."/>
            <person name="O'Reilly M."/>
            <person name="Ogawa K."/>
            <person name="Ogiwara A."/>
            <person name="Oudega B."/>
            <person name="Park S.-H."/>
            <person name="Parro V."/>
            <person name="Pohl T.M."/>
            <person name="Portetelle D."/>
            <person name="Porwollik S."/>
            <person name="Prescott A.M."/>
            <person name="Presecan E."/>
            <person name="Pujic P."/>
            <person name="Purnelle B."/>
            <person name="Rapoport G."/>
            <person name="Rey M."/>
            <person name="Reynolds S."/>
            <person name="Rieger M."/>
            <person name="Rivolta C."/>
            <person name="Rocha E."/>
            <person name="Roche B."/>
            <person name="Rose M."/>
            <person name="Sadaie Y."/>
            <person name="Sato T."/>
            <person name="Scanlan E."/>
            <person name="Schleich S."/>
            <person name="Schroeter R."/>
            <person name="Scoffone F."/>
            <person name="Sekiguchi J."/>
            <person name="Sekowska A."/>
            <person name="Seror S.J."/>
            <person name="Serror P."/>
            <person name="Shin B.-S."/>
            <person name="Soldo B."/>
            <person name="Sorokin A."/>
            <person name="Tacconi E."/>
            <person name="Takagi T."/>
            <person name="Takahashi H."/>
            <person name="Takemaru K."/>
            <person name="Takeuchi M."/>
            <person name="Tamakoshi A."/>
            <person name="Tanaka T."/>
            <person name="Terpstra P."/>
            <person name="Tognoni A."/>
            <person name="Tosato V."/>
            <person name="Uchiyama S."/>
            <person name="Vandenbol M."/>
            <person name="Vannier F."/>
            <person name="Vassarotti A."/>
            <person name="Viari A."/>
            <person name="Wambutt R."/>
            <person name="Wedler E."/>
            <person name="Wedler H."/>
            <person name="Weitzenegger T."/>
            <person name="Winters P."/>
            <person name="Wipat A."/>
            <person name="Yamamoto H."/>
            <person name="Yamane K."/>
            <person name="Yasumoto K."/>
            <person name="Yata K."/>
            <person name="Yoshida K."/>
            <person name="Yoshikawa H.-F."/>
            <person name="Zumstein E."/>
            <person name="Yoshikawa H."/>
            <person name="Danchin A."/>
        </authorList>
    </citation>
    <scope>NUCLEOTIDE SEQUENCE [LARGE SCALE GENOMIC DNA]</scope>
    <source>
        <strain>168</strain>
    </source>
</reference>
<accession>O31906</accession>
<feature type="chain" id="PRO_0000360186" description="SPbeta prophage-derived uncharacterized protein YorH">
    <location>
        <begin position="1"/>
        <end position="156"/>
    </location>
</feature>
<name>YORH_BACSU</name>